<organism>
    <name type="scientific">Homo sapiens</name>
    <name type="common">Human</name>
    <dbReference type="NCBI Taxonomy" id="9606"/>
    <lineage>
        <taxon>Eukaryota</taxon>
        <taxon>Metazoa</taxon>
        <taxon>Chordata</taxon>
        <taxon>Craniata</taxon>
        <taxon>Vertebrata</taxon>
        <taxon>Euteleostomi</taxon>
        <taxon>Mammalia</taxon>
        <taxon>Eutheria</taxon>
        <taxon>Euarchontoglires</taxon>
        <taxon>Primates</taxon>
        <taxon>Haplorrhini</taxon>
        <taxon>Catarrhini</taxon>
        <taxon>Hominidae</taxon>
        <taxon>Homo</taxon>
    </lineage>
</organism>
<sequence>MVEGRVSEFLKKLGFSGGGRQYQALEKDEEEALIDEQSELKAIEKEKKVTALPPKEACKCQKEDLARAFCVDLHTGLSEFSVTQRRLAHGWNEFVADNSEPVWKKYLDQFKNPLILLLLGSALVSVLTKEYEDAVSIATAVLVVVTVAFIQEYRSEKSLEELTKLVPPECNCLREGKLQHLLARELVPGDVVSLSIGDRIPADIRLTEVTDLLVDESSFTGEAEPCSKTDSPLTGGGDLTTLSNIVFMGTLVQYGRGQGVVIGTGESSQFGEVFKMMQAEETPKTPLQKSMDRLGKQLTLFSFGIIGLIMLIGWSQGKQLLSMFTIGVSLAVAAIPEGLPIVVMVTLVLGVLRMAKKRVIVKKLPIVETLGCCSVLCSDKTGTLTANEMTVTQLVTSDGLRAEVSGVGYDGQGTVCLLPSKEVIKEFSNVSVGKLVEAGCVANNAVIRKNAVMGQPTEGALMALAMKMDLSDIKNSYIRKKEIPFSSEQKWMAVKCSLKTEDQEDIYFMKGALEEVIRYCTMYNNGGIPLPLTPQQRSFCLQEEKRMGSLGLRVLALASGPELGRLTFLGLVGIIDPPRVGVKEAVQVLSESGVSVKMITGDALETALAIGRNIGLCNGKLQAMSGEEVDSVEKGELADRVGKVSVFFRTSPKHKLKIIKALQESGAIVAMTGDGVNDAVALKSADIGIAMGQTGTDVSKEAANMILVDDDFSAIMNAVEEGKGIFYNIKNFVRFQLSTSISALSLITLSTVFNLPSPLNAMQILWINIIMDGPPAQSLGVEPVDKDAFRQPPRSVRDTILSRALILKILMSAAIIISGTLFIFWKEMPEDRASTPRTTTMTFTCFVFFDLFNALTCRSQTKLIFEIGFLRNHMFLYSVLGSILGQLAVIYIPPLQRVFQTENLGALDLLFLTGLASSVFILSELLKLCEKYCCSPKRVQMHPEDV</sequence>
<reference key="1">
    <citation type="journal article" date="2005" name="J. Biol. Chem.">
        <title>The secretory pathway Ca2+/Mn2+-ATPase 2 is a Golgi-localized pump with high affinity for Ca2+ ions.</title>
        <authorList>
            <person name="Vanoevelen J."/>
            <person name="Dode L."/>
            <person name="Van Baelen K."/>
            <person name="Fairclough R.J."/>
            <person name="Missiaen L."/>
            <person name="Raeymaekers L."/>
            <person name="Wuytack F."/>
        </authorList>
    </citation>
    <scope>NUCLEOTIDE SEQUENCE [MRNA] (ISOFORM 1)</scope>
    <scope>VARIANT MET-165</scope>
    <scope>FUNCTION</scope>
    <scope>CATALYTIC ACTIVITY</scope>
    <scope>SUBCELLULAR LOCATION</scope>
    <scope>TISSUE SPECIFICITY</scope>
</reference>
<reference key="2">
    <citation type="journal article" date="1998" name="DNA Res.">
        <title>Prediction of the coding sequences of unidentified human genes. X. The complete sequences of 100 new cDNA clones from brain which can code for large proteins in vitro.</title>
        <authorList>
            <person name="Ishikawa K."/>
            <person name="Nagase T."/>
            <person name="Suyama M."/>
            <person name="Miyajima N."/>
            <person name="Tanaka A."/>
            <person name="Kotani H."/>
            <person name="Nomura N."/>
            <person name="Ohara O."/>
        </authorList>
    </citation>
    <scope>NUCLEOTIDE SEQUENCE [LARGE SCALE MRNA] (ISOFORM 2)</scope>
    <source>
        <tissue>Brain</tissue>
    </source>
</reference>
<reference key="3">
    <citation type="journal article" date="2004" name="Nat. Genet.">
        <title>Complete sequencing and characterization of 21,243 full-length human cDNAs.</title>
        <authorList>
            <person name="Ota T."/>
            <person name="Suzuki Y."/>
            <person name="Nishikawa T."/>
            <person name="Otsuki T."/>
            <person name="Sugiyama T."/>
            <person name="Irie R."/>
            <person name="Wakamatsu A."/>
            <person name="Hayashi K."/>
            <person name="Sato H."/>
            <person name="Nagai K."/>
            <person name="Kimura K."/>
            <person name="Makita H."/>
            <person name="Sekine M."/>
            <person name="Obayashi M."/>
            <person name="Nishi T."/>
            <person name="Shibahara T."/>
            <person name="Tanaka T."/>
            <person name="Ishii S."/>
            <person name="Yamamoto J."/>
            <person name="Saito K."/>
            <person name="Kawai Y."/>
            <person name="Isono Y."/>
            <person name="Nakamura Y."/>
            <person name="Nagahari K."/>
            <person name="Murakami K."/>
            <person name="Yasuda T."/>
            <person name="Iwayanagi T."/>
            <person name="Wagatsuma M."/>
            <person name="Shiratori A."/>
            <person name="Sudo H."/>
            <person name="Hosoiri T."/>
            <person name="Kaku Y."/>
            <person name="Kodaira H."/>
            <person name="Kondo H."/>
            <person name="Sugawara M."/>
            <person name="Takahashi M."/>
            <person name="Kanda K."/>
            <person name="Yokoi T."/>
            <person name="Furuya T."/>
            <person name="Kikkawa E."/>
            <person name="Omura Y."/>
            <person name="Abe K."/>
            <person name="Kamihara K."/>
            <person name="Katsuta N."/>
            <person name="Sato K."/>
            <person name="Tanikawa M."/>
            <person name="Yamazaki M."/>
            <person name="Ninomiya K."/>
            <person name="Ishibashi T."/>
            <person name="Yamashita H."/>
            <person name="Murakawa K."/>
            <person name="Fujimori K."/>
            <person name="Tanai H."/>
            <person name="Kimata M."/>
            <person name="Watanabe M."/>
            <person name="Hiraoka S."/>
            <person name="Chiba Y."/>
            <person name="Ishida S."/>
            <person name="Ono Y."/>
            <person name="Takiguchi S."/>
            <person name="Watanabe S."/>
            <person name="Yosida M."/>
            <person name="Hotuta T."/>
            <person name="Kusano J."/>
            <person name="Kanehori K."/>
            <person name="Takahashi-Fujii A."/>
            <person name="Hara H."/>
            <person name="Tanase T.-O."/>
            <person name="Nomura Y."/>
            <person name="Togiya S."/>
            <person name="Komai F."/>
            <person name="Hara R."/>
            <person name="Takeuchi K."/>
            <person name="Arita M."/>
            <person name="Imose N."/>
            <person name="Musashino K."/>
            <person name="Yuuki H."/>
            <person name="Oshima A."/>
            <person name="Sasaki N."/>
            <person name="Aotsuka S."/>
            <person name="Yoshikawa Y."/>
            <person name="Matsunawa H."/>
            <person name="Ichihara T."/>
            <person name="Shiohata N."/>
            <person name="Sano S."/>
            <person name="Moriya S."/>
            <person name="Momiyama H."/>
            <person name="Satoh N."/>
            <person name="Takami S."/>
            <person name="Terashima Y."/>
            <person name="Suzuki O."/>
            <person name="Nakagawa S."/>
            <person name="Senoh A."/>
            <person name="Mizoguchi H."/>
            <person name="Goto Y."/>
            <person name="Shimizu F."/>
            <person name="Wakebe H."/>
            <person name="Hishigaki H."/>
            <person name="Watanabe T."/>
            <person name="Sugiyama A."/>
            <person name="Takemoto M."/>
            <person name="Kawakami B."/>
            <person name="Yamazaki M."/>
            <person name="Watanabe K."/>
            <person name="Kumagai A."/>
            <person name="Itakura S."/>
            <person name="Fukuzumi Y."/>
            <person name="Fujimori Y."/>
            <person name="Komiyama M."/>
            <person name="Tashiro H."/>
            <person name="Tanigami A."/>
            <person name="Fujiwara T."/>
            <person name="Ono T."/>
            <person name="Yamada K."/>
            <person name="Fujii Y."/>
            <person name="Ozaki K."/>
            <person name="Hirao M."/>
            <person name="Ohmori Y."/>
            <person name="Kawabata A."/>
            <person name="Hikiji T."/>
            <person name="Kobatake N."/>
            <person name="Inagaki H."/>
            <person name="Ikema Y."/>
            <person name="Okamoto S."/>
            <person name="Okitani R."/>
            <person name="Kawakami T."/>
            <person name="Noguchi S."/>
            <person name="Itoh T."/>
            <person name="Shigeta K."/>
            <person name="Senba T."/>
            <person name="Matsumura K."/>
            <person name="Nakajima Y."/>
            <person name="Mizuno T."/>
            <person name="Morinaga M."/>
            <person name="Sasaki M."/>
            <person name="Togashi T."/>
            <person name="Oyama M."/>
            <person name="Hata H."/>
            <person name="Watanabe M."/>
            <person name="Komatsu T."/>
            <person name="Mizushima-Sugano J."/>
            <person name="Satoh T."/>
            <person name="Shirai Y."/>
            <person name="Takahashi Y."/>
            <person name="Nakagawa K."/>
            <person name="Okumura K."/>
            <person name="Nagase T."/>
            <person name="Nomura N."/>
            <person name="Kikuchi H."/>
            <person name="Masuho Y."/>
            <person name="Yamashita R."/>
            <person name="Nakai K."/>
            <person name="Yada T."/>
            <person name="Nakamura Y."/>
            <person name="Ohara O."/>
            <person name="Isogai T."/>
            <person name="Sugano S."/>
        </authorList>
    </citation>
    <scope>NUCLEOTIDE SEQUENCE [LARGE SCALE MRNA] (ISOFORM 1)</scope>
    <scope>VARIANT LEU-466</scope>
    <source>
        <tissue>Prostate</tissue>
    </source>
</reference>
<reference key="4">
    <citation type="journal article" date="2007" name="BMC Genomics">
        <title>The full-ORF clone resource of the German cDNA consortium.</title>
        <authorList>
            <person name="Bechtel S."/>
            <person name="Rosenfelder H."/>
            <person name="Duda A."/>
            <person name="Schmidt C.P."/>
            <person name="Ernst U."/>
            <person name="Wellenreuther R."/>
            <person name="Mehrle A."/>
            <person name="Schuster C."/>
            <person name="Bahr A."/>
            <person name="Bloecker H."/>
            <person name="Heubner D."/>
            <person name="Hoerlein A."/>
            <person name="Michel G."/>
            <person name="Wedler H."/>
            <person name="Koehrer K."/>
            <person name="Ottenwaelder B."/>
            <person name="Poustka A."/>
            <person name="Wiemann S."/>
            <person name="Schupp I."/>
        </authorList>
    </citation>
    <scope>NUCLEOTIDE SEQUENCE [LARGE SCALE MRNA] (ISOFORMS 1 AND 3)</scope>
    <scope>VARIANT GLN-604</scope>
    <source>
        <tissue>Endometrium</tissue>
        <tissue>Small intestine</tissue>
    </source>
</reference>
<reference key="5">
    <citation type="journal article" date="2004" name="Nature">
        <title>The sequence and analysis of duplication-rich human chromosome 16.</title>
        <authorList>
            <person name="Martin J."/>
            <person name="Han C."/>
            <person name="Gordon L.A."/>
            <person name="Terry A."/>
            <person name="Prabhakar S."/>
            <person name="She X."/>
            <person name="Xie G."/>
            <person name="Hellsten U."/>
            <person name="Chan Y.M."/>
            <person name="Altherr M."/>
            <person name="Couronne O."/>
            <person name="Aerts A."/>
            <person name="Bajorek E."/>
            <person name="Black S."/>
            <person name="Blumer H."/>
            <person name="Branscomb E."/>
            <person name="Brown N.C."/>
            <person name="Bruno W.J."/>
            <person name="Buckingham J.M."/>
            <person name="Callen D.F."/>
            <person name="Campbell C.S."/>
            <person name="Campbell M.L."/>
            <person name="Campbell E.W."/>
            <person name="Caoile C."/>
            <person name="Challacombe J.F."/>
            <person name="Chasteen L.A."/>
            <person name="Chertkov O."/>
            <person name="Chi H.C."/>
            <person name="Christensen M."/>
            <person name="Clark L.M."/>
            <person name="Cohn J.D."/>
            <person name="Denys M."/>
            <person name="Detter J.C."/>
            <person name="Dickson M."/>
            <person name="Dimitrijevic-Bussod M."/>
            <person name="Escobar J."/>
            <person name="Fawcett J.J."/>
            <person name="Flowers D."/>
            <person name="Fotopulos D."/>
            <person name="Glavina T."/>
            <person name="Gomez M."/>
            <person name="Gonzales E."/>
            <person name="Goodstein D."/>
            <person name="Goodwin L.A."/>
            <person name="Grady D.L."/>
            <person name="Grigoriev I."/>
            <person name="Groza M."/>
            <person name="Hammon N."/>
            <person name="Hawkins T."/>
            <person name="Haydu L."/>
            <person name="Hildebrand C.E."/>
            <person name="Huang W."/>
            <person name="Israni S."/>
            <person name="Jett J."/>
            <person name="Jewett P.B."/>
            <person name="Kadner K."/>
            <person name="Kimball H."/>
            <person name="Kobayashi A."/>
            <person name="Krawczyk M.-C."/>
            <person name="Leyba T."/>
            <person name="Longmire J.L."/>
            <person name="Lopez F."/>
            <person name="Lou Y."/>
            <person name="Lowry S."/>
            <person name="Ludeman T."/>
            <person name="Manohar C.F."/>
            <person name="Mark G.A."/>
            <person name="McMurray K.L."/>
            <person name="Meincke L.J."/>
            <person name="Morgan J."/>
            <person name="Moyzis R.K."/>
            <person name="Mundt M.O."/>
            <person name="Munk A.C."/>
            <person name="Nandkeshwar R.D."/>
            <person name="Pitluck S."/>
            <person name="Pollard M."/>
            <person name="Predki P."/>
            <person name="Parson-Quintana B."/>
            <person name="Ramirez L."/>
            <person name="Rash S."/>
            <person name="Retterer J."/>
            <person name="Ricke D.O."/>
            <person name="Robinson D.L."/>
            <person name="Rodriguez A."/>
            <person name="Salamov A."/>
            <person name="Saunders E.H."/>
            <person name="Scott D."/>
            <person name="Shough T."/>
            <person name="Stallings R.L."/>
            <person name="Stalvey M."/>
            <person name="Sutherland R.D."/>
            <person name="Tapia R."/>
            <person name="Tesmer J.G."/>
            <person name="Thayer N."/>
            <person name="Thompson L.S."/>
            <person name="Tice H."/>
            <person name="Torney D.C."/>
            <person name="Tran-Gyamfi M."/>
            <person name="Tsai M."/>
            <person name="Ulanovsky L.E."/>
            <person name="Ustaszewska A."/>
            <person name="Vo N."/>
            <person name="White P.S."/>
            <person name="Williams A.L."/>
            <person name="Wills P.L."/>
            <person name="Wu J.-R."/>
            <person name="Wu K."/>
            <person name="Yang J."/>
            <person name="DeJong P."/>
            <person name="Bruce D."/>
            <person name="Doggett N.A."/>
            <person name="Deaven L."/>
            <person name="Schmutz J."/>
            <person name="Grimwood J."/>
            <person name="Richardson P."/>
            <person name="Rokhsar D.S."/>
            <person name="Eichler E.E."/>
            <person name="Gilna P."/>
            <person name="Lucas S.M."/>
            <person name="Myers R.M."/>
            <person name="Rubin E.M."/>
            <person name="Pennacchio L.A."/>
        </authorList>
    </citation>
    <scope>NUCLEOTIDE SEQUENCE [LARGE SCALE GENOMIC DNA]</scope>
</reference>
<reference key="6">
    <citation type="journal article" date="2005" name="J. Biol. Chem.">
        <title>A novel isoform of the secretory pathway Ca2+,Mn(2+)-ATPase, hSPCA2, has unusual properties and is expressed in the brain.</title>
        <authorList>
            <person name="Xiang M."/>
            <person name="Mohamalawari D."/>
            <person name="Rao R."/>
        </authorList>
    </citation>
    <scope>FUNCTION</scope>
    <scope>CATALYTIC ACTIVITY</scope>
    <scope>TISSUE SPECIFICITY</scope>
</reference>
<reference key="7">
    <citation type="journal article" date="2006" name="J. Biol. Chem.">
        <title>Dissection of the functional differences between human secretory pathway Ca2+/Mn2+-ATPase (SPCA) 1 and 2 isoenzymes by steady-state and transient kinetic analyses.</title>
        <authorList>
            <person name="Dode L."/>
            <person name="Andersen J.P."/>
            <person name="Vanoevelen J."/>
            <person name="Raeymaekers L."/>
            <person name="Missiaen L."/>
            <person name="Vilsen B."/>
            <person name="Wuytack F."/>
        </authorList>
    </citation>
    <scope>FUNCTION</scope>
    <scope>CATALYTIC ACTIVITY</scope>
</reference>
<reference key="8">
    <citation type="journal article" date="2008" name="Proc. Natl. Acad. Sci. U.S.A.">
        <title>A quantitative atlas of mitotic phosphorylation.</title>
        <authorList>
            <person name="Dephoure N."/>
            <person name="Zhou C."/>
            <person name="Villen J."/>
            <person name="Beausoleil S.A."/>
            <person name="Bakalarski C.E."/>
            <person name="Elledge S.J."/>
            <person name="Gygi S.P."/>
        </authorList>
    </citation>
    <scope>PHOSPHORYLATION [LARGE SCALE ANALYSIS] AT THR-264; SER-267 AND SER-268</scope>
    <scope>IDENTIFICATION BY MASS SPECTROMETRY [LARGE SCALE ANALYSIS]</scope>
    <source>
        <tissue>Cervix carcinoma</tissue>
    </source>
</reference>
<reference key="9">
    <citation type="journal article" date="2010" name="Cell">
        <title>Store-independent activation of Orai1 by SPCA2 in mammary tumors.</title>
        <authorList>
            <person name="Feng M."/>
            <person name="Grice D.M."/>
            <person name="Faddy H.M."/>
            <person name="Nguyen N."/>
            <person name="Leitch S."/>
            <person name="Wang Y."/>
            <person name="Muend S."/>
            <person name="Kenny P.A."/>
            <person name="Sukumar S."/>
            <person name="Roberts-Thomson S.J."/>
            <person name="Monteith G.R."/>
            <person name="Rao R."/>
        </authorList>
    </citation>
    <scope>FUNCTION</scope>
    <scope>SUBCELLULAR LOCATION</scope>
    <scope>INTERACTION WITH ORAI1</scope>
    <scope>MUTAGENESIS OF ASP-379 AND ASP-772</scope>
</reference>
<reference key="10">
    <citation type="journal article" date="2013" name="PLoS ONE">
        <title>SPCA2 regulates Orai1 trafficking and store independent Ca2+ entry in a model of lactation.</title>
        <authorList>
            <person name="Cross B.M."/>
            <person name="Hack A."/>
            <person name="Reinhardt T.A."/>
            <person name="Rao R."/>
        </authorList>
    </citation>
    <scope>FUNCTION</scope>
</reference>
<reference key="11">
    <citation type="journal article" date="2019" name="J. Biol. Chem.">
        <title>An N-terminal Ca2+-binding motif regulates the secretory pathway Ca2+/Mn2+-transport ATPase SPCA1.</title>
        <authorList>
            <person name="Chen J."/>
            <person name="Smaardijk S."/>
            <person name="Mattelaer C.A."/>
            <person name="Pamula F."/>
            <person name="Vandecaetsbeek I."/>
            <person name="Vanoevelen J."/>
            <person name="Wuytack F."/>
            <person name="Lescrinier E."/>
            <person name="Eggermont J."/>
            <person name="Vangheluwe P."/>
        </authorList>
    </citation>
    <scope>FUNCTION</scope>
    <scope>CATALYTIC ACTIVITY</scope>
    <scope>BIOPHYSICOCHEMICAL PROPERTIES</scope>
</reference>
<gene>
    <name evidence="21" type="primary">ATP2C2</name>
    <name type="synonym">KIAA0703</name>
    <name type="synonym">SPCA2</name>
</gene>
<proteinExistence type="evidence at protein level"/>
<feature type="chain" id="PRO_0000046207" description="Calcium-transporting ATPase type 2C member 2">
    <location>
        <begin position="1"/>
        <end position="946"/>
    </location>
</feature>
<feature type="topological domain" description="Cytoplasmic" evidence="3">
    <location>
        <begin position="1"/>
        <end position="106"/>
    </location>
</feature>
<feature type="transmembrane region" description="Helical; Name=1" evidence="3">
    <location>
        <begin position="107"/>
        <end position="127"/>
    </location>
</feature>
<feature type="topological domain" description="Extracellular" evidence="3">
    <location>
        <begin position="128"/>
        <end position="129"/>
    </location>
</feature>
<feature type="transmembrane region" description="Helical; Name=2" evidence="3">
    <location>
        <begin position="130"/>
        <end position="150"/>
    </location>
</feature>
<feature type="topological domain" description="Cytoplasmic" evidence="3">
    <location>
        <begin position="151"/>
        <end position="231"/>
    </location>
</feature>
<feature type="transmembrane region" description="Helical; Name=3" evidence="3">
    <location>
        <begin position="232"/>
        <end position="252"/>
    </location>
</feature>
<feature type="topological domain" description="Extracellular" evidence="3">
    <location>
        <begin position="253"/>
        <end position="293"/>
    </location>
</feature>
<feature type="transmembrane region" description="Helical; Name=4" evidence="3">
    <location>
        <begin position="294"/>
        <end position="314"/>
    </location>
</feature>
<feature type="topological domain" description="Cytoplasmic" evidence="3">
    <location>
        <begin position="315"/>
        <end position="331"/>
    </location>
</feature>
<feature type="transmembrane region" description="Helical; Name=5" evidence="3">
    <location>
        <begin position="332"/>
        <end position="352"/>
    </location>
</feature>
<feature type="topological domain" description="Extracellular" evidence="3">
    <location>
        <begin position="353"/>
        <end position="750"/>
    </location>
</feature>
<feature type="transmembrane region" description="Helical; Name=6" evidence="3">
    <location>
        <begin position="751"/>
        <end position="771"/>
    </location>
</feature>
<feature type="topological domain" description="Cytoplasmic" evidence="3">
    <location>
        <begin position="772"/>
        <end position="804"/>
    </location>
</feature>
<feature type="transmembrane region" description="Helical; Name=7" evidence="3">
    <location>
        <begin position="805"/>
        <end position="825"/>
    </location>
</feature>
<feature type="topological domain" description="Extracellular" evidence="3">
    <location>
        <begin position="826"/>
        <end position="837"/>
    </location>
</feature>
<feature type="transmembrane region" description="Helical; Name=8" evidence="3">
    <location>
        <begin position="838"/>
        <end position="855"/>
    </location>
</feature>
<feature type="topological domain" description="Cytoplasmic" evidence="3">
    <location>
        <begin position="856"/>
        <end position="874"/>
    </location>
</feature>
<feature type="transmembrane region" description="Helical; Name=9" evidence="3">
    <location>
        <begin position="875"/>
        <end position="895"/>
    </location>
</feature>
<feature type="topological domain" description="Extracellular" evidence="3">
    <location>
        <begin position="896"/>
        <end position="905"/>
    </location>
</feature>
<feature type="transmembrane region" description="Helical; Name=10" evidence="3">
    <location>
        <begin position="906"/>
        <end position="926"/>
    </location>
</feature>
<feature type="topological domain" description="Cytoplasmic" evidence="3">
    <location>
        <begin position="927"/>
        <end position="946"/>
    </location>
</feature>
<feature type="region of interest" description="Interaction with ORAI1" evidence="9">
    <location>
        <begin position="71"/>
        <end position="95"/>
    </location>
</feature>
<feature type="active site" description="4-aspartylphosphate intermediate" evidence="1">
    <location>
        <position position="379"/>
    </location>
</feature>
<feature type="binding site" evidence="1">
    <location>
        <position position="332"/>
    </location>
    <ligand>
        <name>Ca(2+)</name>
        <dbReference type="ChEBI" id="CHEBI:29108"/>
        <label>2</label>
    </ligand>
</feature>
<feature type="binding site" evidence="1">
    <location>
        <position position="333"/>
    </location>
    <ligand>
        <name>Ca(2+)</name>
        <dbReference type="ChEBI" id="CHEBI:29108"/>
        <label>2</label>
    </ligand>
</feature>
<feature type="binding site" evidence="1">
    <location>
        <position position="335"/>
    </location>
    <ligand>
        <name>Ca(2+)</name>
        <dbReference type="ChEBI" id="CHEBI:29108"/>
        <label>2</label>
    </ligand>
</feature>
<feature type="binding site" evidence="1">
    <location>
        <position position="337"/>
    </location>
    <ligand>
        <name>Ca(2+)</name>
        <dbReference type="ChEBI" id="CHEBI:29108"/>
        <label>2</label>
    </ligand>
</feature>
<feature type="binding site" evidence="1">
    <location>
        <position position="674"/>
    </location>
    <ligand>
        <name>Mg(2+)</name>
        <dbReference type="ChEBI" id="CHEBI:18420"/>
    </ligand>
</feature>
<feature type="binding site" evidence="1">
    <location>
        <position position="678"/>
    </location>
    <ligand>
        <name>Mg(2+)</name>
        <dbReference type="ChEBI" id="CHEBI:18420"/>
    </ligand>
</feature>
<feature type="binding site" evidence="1">
    <location>
        <position position="768"/>
    </location>
    <ligand>
        <name>Ca(2+)</name>
        <dbReference type="ChEBI" id="CHEBI:29108"/>
        <label>2</label>
    </ligand>
</feature>
<feature type="binding site" evidence="1">
    <location>
        <position position="772"/>
    </location>
    <ligand>
        <name>Ca(2+)</name>
        <dbReference type="ChEBI" id="CHEBI:29108"/>
        <label>2</label>
    </ligand>
</feature>
<feature type="modified residue" description="Phosphothreonine" evidence="22">
    <location>
        <position position="264"/>
    </location>
</feature>
<feature type="modified residue" description="Phosphoserine" evidence="22">
    <location>
        <position position="267"/>
    </location>
</feature>
<feature type="modified residue" description="Phosphoserine" evidence="22">
    <location>
        <position position="268"/>
    </location>
</feature>
<feature type="splice variant" id="VSP_035989" description="In isoform 2." evidence="15">
    <original>MVEGRVSEFLKKLGFSGGGRQYQALEKDEEEALIDEQSELKAIEKEKKVTALPPKEACKCQKEDLARAFC</original>
    <variation>MLHFHLLKFKTRVVFSAVIIMVTGLCLFLLSLPHLHGVFEQVPAPWWTSLCPWPIMEAAAFQSGSLYPVASFLAAPMSELVPDLSFQ</variation>
    <location>
        <begin position="1"/>
        <end position="70"/>
    </location>
</feature>
<feature type="splice variant" id="VSP_054679" description="In isoform 3." evidence="14">
    <original>S</original>
    <variation>RSSQKTEVCCTAVRLGVEGRGESTWAGRAG</variation>
    <location>
        <position position="778"/>
    </location>
</feature>
<feature type="sequence variant" id="VAR_059137" description="In dbSNP:rs247818." evidence="6">
    <original>L</original>
    <variation>M</variation>
    <location>
        <position position="165"/>
    </location>
</feature>
<feature type="sequence variant" id="VAR_047935" description="In dbSNP:rs2303853.">
    <original>G</original>
    <variation>S</variation>
    <location>
        <position position="411"/>
    </location>
</feature>
<feature type="sequence variant" id="VAR_047936" description="In dbSNP:rs247897." evidence="4">
    <original>M</original>
    <variation>L</variation>
    <location>
        <position position="466"/>
    </location>
</feature>
<feature type="sequence variant" id="VAR_070929" description="In dbSNP:rs62640926." evidence="8">
    <original>L</original>
    <variation>Q</variation>
    <location>
        <position position="604"/>
    </location>
</feature>
<feature type="sequence variant" id="VAR_047937" description="In dbSNP:rs16973859.">
    <original>L</original>
    <variation>P</variation>
    <location>
        <position position="907"/>
    </location>
</feature>
<feature type="mutagenesis site" description="Loss of calcium-dependent ATPase activity. Has no effect on trafficking to the plasma membrane." evidence="9">
    <original>D</original>
    <variation>N</variation>
    <location>
        <position position="379"/>
    </location>
</feature>
<feature type="mutagenesis site" description="Loss of calcium-dependent ATPase activity." evidence="9">
    <original>D</original>
    <variation>A</variation>
    <location>
        <position position="772"/>
    </location>
</feature>
<feature type="sequence conflict" description="In Ref. 4; CAI46049." evidence="16" ref="4">
    <original>N</original>
    <variation>D</variation>
    <location>
        <position position="171"/>
    </location>
</feature>
<feature type="sequence conflict" description="In Ref. 4; CAI46049." evidence="16" ref="4">
    <original>V</original>
    <variation>A</variation>
    <location>
        <position position="361"/>
    </location>
</feature>
<feature type="sequence conflict" description="In Ref. 4; CAI46049." evidence="16" ref="4">
    <original>L</original>
    <variation>R</variation>
    <location>
        <position position="880"/>
    </location>
</feature>
<feature type="sequence conflict" description="In Ref. 2; BAA31678." evidence="16" ref="2">
    <original>R</original>
    <variation>I</variation>
    <location sequence="O75185-2">
        <position position="12"/>
    </location>
</feature>
<feature type="sequence conflict" description="In Ref. 4; CAI46049." evidence="16" ref="4">
    <original>A</original>
    <variation>G</variation>
    <location sequence="O75185-3">
        <position position="789"/>
    </location>
</feature>
<keyword id="KW-0025">Alternative splicing</keyword>
<keyword id="KW-0067">ATP-binding</keyword>
<keyword id="KW-0106">Calcium</keyword>
<keyword id="KW-0109">Calcium transport</keyword>
<keyword id="KW-1003">Cell membrane</keyword>
<keyword id="KW-0333">Golgi apparatus</keyword>
<keyword id="KW-0406">Ion transport</keyword>
<keyword id="KW-0460">Magnesium</keyword>
<keyword id="KW-0472">Membrane</keyword>
<keyword id="KW-0479">Metal-binding</keyword>
<keyword id="KW-0547">Nucleotide-binding</keyword>
<keyword id="KW-0597">Phosphoprotein</keyword>
<keyword id="KW-1267">Proteomics identification</keyword>
<keyword id="KW-1185">Reference proteome</keyword>
<keyword id="KW-1278">Translocase</keyword>
<keyword id="KW-0812">Transmembrane</keyword>
<keyword id="KW-1133">Transmembrane helix</keyword>
<keyword id="KW-0813">Transport</keyword>
<accession>O75185</accession>
<accession>B4DU76</accession>
<accession>E7ES94</accession>
<accession>Q5HYC3</accession>
<accession>Q5S053</accession>
<accession>Q68CQ2</accession>
<comment type="function">
    <text evidence="5 6 7 9 10 11">ATP-driven pump that supplies the Golgi apparatus with Ca(2+) and Mn(2+) ions, both essential cofactors for processing and trafficking of newly synthesized proteins in the secretory pathway (PubMed:15677451, PubMed:15831496, PubMed:16332677, PubMed:30923126). Within a catalytic cycle, acquires Ca(2+) or Mn(2+) ions on the cytoplasmic side of the membrane and delivers them to the lumenal side. The transfer of ions across the membrane is coupled to ATP hydrolysis and is associated with a transient phosphorylation that shifts the pump conformation from inward-facing to outward-facing state (PubMed:15831496, PubMed:16332677). Induces Ca(2+) influx independently of its ATP-driven pump function. At the basolateral membrane of mammary epithelial cells, interacts with Ca(2+) channel ORAI1 and mediates Ca(2+) entry independently of the Ca(2+) content of endoplasmic reticulum or Golgi stores. May facilitate transepithelial transport of large quantities of Ca(2+) for milk secretion via activation of Ca(2+) influx channels at the plasma membrane and active Ca(2+) transport at the Golgi apparatus (PubMed:20887894, PubMed:23840669).</text>
</comment>
<comment type="catalytic activity">
    <reaction evidence="5 6 7 11">
        <text>Ca(2+)(in) + ATP + H2O = Ca(2+)(out) + ADP + phosphate + H(+)</text>
        <dbReference type="Rhea" id="RHEA:18105"/>
        <dbReference type="ChEBI" id="CHEBI:15377"/>
        <dbReference type="ChEBI" id="CHEBI:15378"/>
        <dbReference type="ChEBI" id="CHEBI:29108"/>
        <dbReference type="ChEBI" id="CHEBI:30616"/>
        <dbReference type="ChEBI" id="CHEBI:43474"/>
        <dbReference type="ChEBI" id="CHEBI:456216"/>
        <dbReference type="EC" id="7.2.2.10"/>
    </reaction>
    <physiologicalReaction direction="left-to-right" evidence="17 18 19 20">
        <dbReference type="Rhea" id="RHEA:18106"/>
    </physiologicalReaction>
</comment>
<comment type="catalytic activity">
    <reaction evidence="6 11">
        <text>Mn(2+)(in) + ATP + H2O = Mn(2+)(out) + ADP + phosphate + H(+)</text>
        <dbReference type="Rhea" id="RHEA:66820"/>
        <dbReference type="ChEBI" id="CHEBI:15377"/>
        <dbReference type="ChEBI" id="CHEBI:15378"/>
        <dbReference type="ChEBI" id="CHEBI:29035"/>
        <dbReference type="ChEBI" id="CHEBI:30616"/>
        <dbReference type="ChEBI" id="CHEBI:43474"/>
        <dbReference type="ChEBI" id="CHEBI:456216"/>
    </reaction>
    <physiologicalReaction direction="left-to-right" evidence="11 18">
        <dbReference type="Rhea" id="RHEA:66821"/>
    </physiologicalReaction>
</comment>
<comment type="biophysicochemical properties">
    <kinetics>
        <KM evidence="11">0.03 uM for Ca(2+) (Ca(2+)-dependent ATP hydrolysis)</KM>
        <KM evidence="11">0.06 uM for Mn(2+) (Mn(2+)-dependent ATP hydrolysis)</KM>
    </kinetics>
</comment>
<comment type="subunit">
    <text evidence="9">Interacts (via N-terminus) with ORAI1 (via N- and C-termini); this interaction regulates Ca(2+) influx at the plasma membrane.</text>
</comment>
<comment type="interaction">
    <interactant intactId="EBI-2939806">
        <id>O75185</id>
    </interactant>
    <interactant intactId="EBI-2291476">
        <id>Q96D31</id>
        <label>ORAI1</label>
    </interactant>
    <organismsDiffer>false</organismsDiffer>
    <experiments>10</experiments>
</comment>
<comment type="subcellular location">
    <subcellularLocation>
        <location evidence="6">Golgi apparatus</location>
        <location evidence="6">trans-Golgi network membrane</location>
        <topology evidence="3">Multi-pass membrane protein</topology>
    </subcellularLocation>
    <subcellularLocation>
        <location evidence="9">Cell membrane</location>
        <topology evidence="3">Multi-pass membrane protein</topology>
    </subcellularLocation>
    <subcellularLocation>
        <location evidence="2">Basolateral cell membrane</location>
        <topology evidence="3">Multi-pass membrane protein</topology>
    </subcellularLocation>
</comment>
<comment type="alternative products">
    <event type="alternative splicing"/>
    <isoform>
        <id>O75185-1</id>
        <name>1</name>
        <sequence type="displayed"/>
    </isoform>
    <isoform>
        <id>O75185-2</id>
        <name>2</name>
        <sequence type="described" ref="VSP_035989"/>
    </isoform>
    <isoform>
        <id>O75185-3</id>
        <name>3</name>
        <sequence type="described" ref="VSP_054679"/>
    </isoform>
</comment>
<comment type="tissue specificity">
    <text evidence="5 6">Highly expressed in the gastrointestinal and respiratory tracts, prostate, thyroid, salivary, and mammary glands (PubMed:15831496). Expressed in colon epithelial cells (at protein level). Expressed in brain and testis (at protein level) (PubMed:15677451).</text>
</comment>
<comment type="similarity">
    <text evidence="16">Belongs to the cation transport ATPase (P-type) (TC 3.A.3) family. Type IIA subfamily.</text>
</comment>
<comment type="sequence caution" evidence="16">
    <conflict type="erroneous initiation">
        <sequence resource="EMBL-CDS" id="BAA31678"/>
    </conflict>
    <text>Extended N-terminus.</text>
</comment>
<evidence type="ECO:0000250" key="1"/>
<evidence type="ECO:0000250" key="2">
    <source>
        <dbReference type="UniProtKB" id="A7L9Z8"/>
    </source>
</evidence>
<evidence type="ECO:0000255" key="3"/>
<evidence type="ECO:0000269" key="4">
    <source>
    </source>
</evidence>
<evidence type="ECO:0000269" key="5">
    <source>
    </source>
</evidence>
<evidence type="ECO:0000269" key="6">
    <source>
    </source>
</evidence>
<evidence type="ECO:0000269" key="7">
    <source>
    </source>
</evidence>
<evidence type="ECO:0000269" key="8">
    <source>
    </source>
</evidence>
<evidence type="ECO:0000269" key="9">
    <source>
    </source>
</evidence>
<evidence type="ECO:0000269" key="10">
    <source>
    </source>
</evidence>
<evidence type="ECO:0000269" key="11">
    <source>
    </source>
</evidence>
<evidence type="ECO:0000303" key="12">
    <source>
    </source>
</evidence>
<evidence type="ECO:0000303" key="13">
    <source>
    </source>
</evidence>
<evidence type="ECO:0000303" key="14">
    <source>
    </source>
</evidence>
<evidence type="ECO:0000303" key="15">
    <source>
    </source>
</evidence>
<evidence type="ECO:0000305" key="16"/>
<evidence type="ECO:0000305" key="17">
    <source>
    </source>
</evidence>
<evidence type="ECO:0000305" key="18">
    <source>
    </source>
</evidence>
<evidence type="ECO:0000305" key="19">
    <source>
    </source>
</evidence>
<evidence type="ECO:0000305" key="20">
    <source>
    </source>
</evidence>
<evidence type="ECO:0000312" key="21">
    <source>
        <dbReference type="HGNC" id="HGNC:29103"/>
    </source>
</evidence>
<evidence type="ECO:0007744" key="22">
    <source>
    </source>
</evidence>
<protein>
    <recommendedName>
        <fullName evidence="16">Calcium-transporting ATPase type 2C member 2</fullName>
        <shortName>ATPase 2C2</shortName>
        <ecNumber evidence="5 6 7 11">7.2.2.10</ecNumber>
    </recommendedName>
    <alternativeName>
        <fullName evidence="13">Ca(2+)/Mn(2+)-ATPase 2C2</fullName>
    </alternativeName>
    <alternativeName>
        <fullName>Secretory pathway Ca(2+)-transporting ATPase type 2</fullName>
        <shortName evidence="12">SPCA2</shortName>
    </alternativeName>
</protein>
<name>AT2C2_HUMAN</name>
<dbReference type="EC" id="7.2.2.10" evidence="5 6 7 11"/>
<dbReference type="EMBL" id="AY791884">
    <property type="protein sequence ID" value="AAV54193.1"/>
    <property type="molecule type" value="mRNA"/>
</dbReference>
<dbReference type="EMBL" id="AB014603">
    <property type="protein sequence ID" value="BAA31678.2"/>
    <property type="status" value="ALT_INIT"/>
    <property type="molecule type" value="mRNA"/>
</dbReference>
<dbReference type="EMBL" id="AK300526">
    <property type="protein sequence ID" value="BAG62238.1"/>
    <property type="molecule type" value="mRNA"/>
</dbReference>
<dbReference type="EMBL" id="BX648333">
    <property type="protein sequence ID" value="CAI46049.1"/>
    <property type="molecule type" value="mRNA"/>
</dbReference>
<dbReference type="EMBL" id="CR749829">
    <property type="protein sequence ID" value="CAH18686.1"/>
    <property type="molecule type" value="mRNA"/>
</dbReference>
<dbReference type="EMBL" id="AC010551">
    <property type="status" value="NOT_ANNOTATED_CDS"/>
    <property type="molecule type" value="Genomic_DNA"/>
</dbReference>
<dbReference type="EMBL" id="AC022165">
    <property type="status" value="NOT_ANNOTATED_CDS"/>
    <property type="molecule type" value="Genomic_DNA"/>
</dbReference>
<dbReference type="CCDS" id="CCDS42207.1">
    <molecule id="O75185-1"/>
</dbReference>
<dbReference type="CCDS" id="CCDS67088.1">
    <molecule id="O75185-3"/>
</dbReference>
<dbReference type="RefSeq" id="NP_001273456.2">
    <molecule id="O75185-3"/>
    <property type="nucleotide sequence ID" value="NM_001286527.3"/>
</dbReference>
<dbReference type="RefSeq" id="NP_001278383.1">
    <property type="nucleotide sequence ID" value="NM_001291454.1"/>
</dbReference>
<dbReference type="RefSeq" id="NP_055676.3">
    <molecule id="O75185-1"/>
    <property type="nucleotide sequence ID" value="NM_014861.4"/>
</dbReference>
<dbReference type="SMR" id="O75185"/>
<dbReference type="BioGRID" id="115243">
    <property type="interactions" value="3"/>
</dbReference>
<dbReference type="FunCoup" id="O75185">
    <property type="interactions" value="281"/>
</dbReference>
<dbReference type="IntAct" id="O75185">
    <property type="interactions" value="2"/>
</dbReference>
<dbReference type="STRING" id="9606.ENSP00000397925"/>
<dbReference type="DrugBank" id="DB01189">
    <property type="generic name" value="Desflurane"/>
</dbReference>
<dbReference type="DrugBank" id="DB00867">
    <property type="generic name" value="Ritodrine"/>
</dbReference>
<dbReference type="DrugBank" id="DB01236">
    <property type="generic name" value="Sevoflurane"/>
</dbReference>
<dbReference type="TCDB" id="3.A.3.2.9">
    <property type="family name" value="the p-type atpase (p-atpase) superfamily"/>
</dbReference>
<dbReference type="iPTMnet" id="O75185"/>
<dbReference type="PhosphoSitePlus" id="O75185"/>
<dbReference type="SwissPalm" id="O75185"/>
<dbReference type="BioMuta" id="ATP2C2"/>
<dbReference type="jPOST" id="O75185"/>
<dbReference type="MassIVE" id="O75185"/>
<dbReference type="PaxDb" id="9606-ENSP00000397925"/>
<dbReference type="PeptideAtlas" id="O75185"/>
<dbReference type="ProteomicsDB" id="17939"/>
<dbReference type="ProteomicsDB" id="49858">
    <molecule id="O75185-1"/>
</dbReference>
<dbReference type="ProteomicsDB" id="49859">
    <molecule id="O75185-2"/>
</dbReference>
<dbReference type="Antibodypedia" id="58367">
    <property type="antibodies" value="58 antibodies from 22 providers"/>
</dbReference>
<dbReference type="DNASU" id="9914"/>
<dbReference type="Ensembl" id="ENST00000262429.9">
    <molecule id="O75185-1"/>
    <property type="protein sequence ID" value="ENSP00000262429.4"/>
    <property type="gene ID" value="ENSG00000064270.13"/>
</dbReference>
<dbReference type="Ensembl" id="ENST00000416219.6">
    <molecule id="O75185-3"/>
    <property type="protein sequence ID" value="ENSP00000397925.2"/>
    <property type="gene ID" value="ENSG00000064270.13"/>
</dbReference>
<dbReference type="GeneID" id="9914"/>
<dbReference type="KEGG" id="hsa:9914"/>
<dbReference type="MANE-Select" id="ENST00000262429.9">
    <property type="protein sequence ID" value="ENSP00000262429.4"/>
    <property type="RefSeq nucleotide sequence ID" value="NM_014861.4"/>
    <property type="RefSeq protein sequence ID" value="NP_055676.3"/>
</dbReference>
<dbReference type="UCSC" id="uc002fhx.4">
    <molecule id="O75185-1"/>
    <property type="organism name" value="human"/>
</dbReference>
<dbReference type="AGR" id="HGNC:29103"/>
<dbReference type="CTD" id="9914"/>
<dbReference type="DisGeNET" id="9914"/>
<dbReference type="GeneCards" id="ATP2C2"/>
<dbReference type="HGNC" id="HGNC:29103">
    <property type="gene designation" value="ATP2C2"/>
</dbReference>
<dbReference type="HPA" id="ENSG00000064270">
    <property type="expression patterns" value="Tissue enhanced (intestine, skin)"/>
</dbReference>
<dbReference type="MalaCards" id="ATP2C2"/>
<dbReference type="MIM" id="613082">
    <property type="type" value="gene"/>
</dbReference>
<dbReference type="neXtProt" id="NX_O75185"/>
<dbReference type="OpenTargets" id="ENSG00000064270"/>
<dbReference type="PharmGKB" id="PA162377204"/>
<dbReference type="VEuPathDB" id="HostDB:ENSG00000064270"/>
<dbReference type="eggNOG" id="KOG0202">
    <property type="taxonomic scope" value="Eukaryota"/>
</dbReference>
<dbReference type="GeneTree" id="ENSGT00940000160275"/>
<dbReference type="HOGENOM" id="CLU_002360_3_1_1"/>
<dbReference type="InParanoid" id="O75185"/>
<dbReference type="OMA" id="IGWVQGK"/>
<dbReference type="OrthoDB" id="3352408at2759"/>
<dbReference type="PAN-GO" id="O75185">
    <property type="GO annotations" value="8 GO annotations based on evolutionary models"/>
</dbReference>
<dbReference type="PhylomeDB" id="O75185"/>
<dbReference type="TreeFam" id="TF354251"/>
<dbReference type="BRENDA" id="7.2.2.10">
    <property type="organism ID" value="2681"/>
</dbReference>
<dbReference type="PathwayCommons" id="O75185"/>
<dbReference type="Reactome" id="R-HSA-936837">
    <property type="pathway name" value="Ion transport by P-type ATPases"/>
</dbReference>
<dbReference type="SABIO-RK" id="O75185"/>
<dbReference type="SignaLink" id="O75185"/>
<dbReference type="BioGRID-ORCS" id="9914">
    <property type="hits" value="11 hits in 1140 CRISPR screens"/>
</dbReference>
<dbReference type="ChiTaRS" id="ATP2C2">
    <property type="organism name" value="human"/>
</dbReference>
<dbReference type="GenomeRNAi" id="9914"/>
<dbReference type="Pharos" id="O75185">
    <property type="development level" value="Tbio"/>
</dbReference>
<dbReference type="PRO" id="PR:O75185"/>
<dbReference type="Proteomes" id="UP000005640">
    <property type="component" value="Chromosome 16"/>
</dbReference>
<dbReference type="RNAct" id="O75185">
    <property type="molecule type" value="protein"/>
</dbReference>
<dbReference type="Bgee" id="ENSG00000064270">
    <property type="expression patterns" value="Expressed in rectum and 133 other cell types or tissues"/>
</dbReference>
<dbReference type="ExpressionAtlas" id="O75185">
    <property type="expression patterns" value="baseline and differential"/>
</dbReference>
<dbReference type="GO" id="GO:0016323">
    <property type="term" value="C:basolateral plasma membrane"/>
    <property type="evidence" value="ECO:0007669"/>
    <property type="project" value="UniProtKB-SubCell"/>
</dbReference>
<dbReference type="GO" id="GO:0009898">
    <property type="term" value="C:cytoplasmic side of plasma membrane"/>
    <property type="evidence" value="ECO:0007669"/>
    <property type="project" value="Ensembl"/>
</dbReference>
<dbReference type="GO" id="GO:0031410">
    <property type="term" value="C:cytoplasmic vesicle"/>
    <property type="evidence" value="ECO:0007669"/>
    <property type="project" value="Ensembl"/>
</dbReference>
<dbReference type="GO" id="GO:0005783">
    <property type="term" value="C:endoplasmic reticulum"/>
    <property type="evidence" value="ECO:0000318"/>
    <property type="project" value="GO_Central"/>
</dbReference>
<dbReference type="GO" id="GO:0000139">
    <property type="term" value="C:Golgi membrane"/>
    <property type="evidence" value="ECO:0000318"/>
    <property type="project" value="GO_Central"/>
</dbReference>
<dbReference type="GO" id="GO:0048471">
    <property type="term" value="C:perinuclear region of cytoplasm"/>
    <property type="evidence" value="ECO:0007669"/>
    <property type="project" value="Ensembl"/>
</dbReference>
<dbReference type="GO" id="GO:0005886">
    <property type="term" value="C:plasma membrane"/>
    <property type="evidence" value="ECO:0000318"/>
    <property type="project" value="GO_Central"/>
</dbReference>
<dbReference type="GO" id="GO:0032588">
    <property type="term" value="C:trans-Golgi network membrane"/>
    <property type="evidence" value="ECO:0000250"/>
    <property type="project" value="UniProtKB"/>
</dbReference>
<dbReference type="GO" id="GO:0005524">
    <property type="term" value="F:ATP binding"/>
    <property type="evidence" value="ECO:0007669"/>
    <property type="project" value="UniProtKB-KW"/>
</dbReference>
<dbReference type="GO" id="GO:0016887">
    <property type="term" value="F:ATP hydrolysis activity"/>
    <property type="evidence" value="ECO:0007669"/>
    <property type="project" value="InterPro"/>
</dbReference>
<dbReference type="GO" id="GO:0046872">
    <property type="term" value="F:metal ion binding"/>
    <property type="evidence" value="ECO:0007669"/>
    <property type="project" value="UniProtKB-KW"/>
</dbReference>
<dbReference type="GO" id="GO:0005388">
    <property type="term" value="F:P-type calcium transporter activity"/>
    <property type="evidence" value="ECO:0000314"/>
    <property type="project" value="UniProtKB"/>
</dbReference>
<dbReference type="GO" id="GO:0140613">
    <property type="term" value="F:P-type manganese transporter activity"/>
    <property type="evidence" value="ECO:0000314"/>
    <property type="project" value="UniProtKB"/>
</dbReference>
<dbReference type="GO" id="GO:0070588">
    <property type="term" value="P:calcium ion transmembrane transport"/>
    <property type="evidence" value="ECO:0000318"/>
    <property type="project" value="GO_Central"/>
</dbReference>
<dbReference type="GO" id="GO:0006874">
    <property type="term" value="P:intracellular calcium ion homeostasis"/>
    <property type="evidence" value="ECO:0000318"/>
    <property type="project" value="GO_Central"/>
</dbReference>
<dbReference type="GO" id="GO:0061180">
    <property type="term" value="P:mammary gland epithelium development"/>
    <property type="evidence" value="ECO:0007669"/>
    <property type="project" value="Ensembl"/>
</dbReference>
<dbReference type="GO" id="GO:0006828">
    <property type="term" value="P:manganese ion transport"/>
    <property type="evidence" value="ECO:0000318"/>
    <property type="project" value="GO_Central"/>
</dbReference>
<dbReference type="GO" id="GO:0090280">
    <property type="term" value="P:positive regulation of calcium ion import"/>
    <property type="evidence" value="ECO:0007669"/>
    <property type="project" value="Ensembl"/>
</dbReference>
<dbReference type="GO" id="GO:0072659">
    <property type="term" value="P:protein localization to plasma membrane"/>
    <property type="evidence" value="ECO:0007669"/>
    <property type="project" value="Ensembl"/>
</dbReference>
<dbReference type="CDD" id="cd02085">
    <property type="entry name" value="P-type_ATPase_SPCA"/>
    <property type="match status" value="1"/>
</dbReference>
<dbReference type="FunFam" id="1.20.1110.10:FF:000075">
    <property type="entry name" value="Calcium-transporting ATPase"/>
    <property type="match status" value="1"/>
</dbReference>
<dbReference type="FunFam" id="2.70.150.10:FF:000008">
    <property type="entry name" value="Calcium-transporting ATPase"/>
    <property type="match status" value="1"/>
</dbReference>
<dbReference type="FunFam" id="3.40.1110.10:FF:000006">
    <property type="entry name" value="Calcium-transporting ATPase"/>
    <property type="match status" value="1"/>
</dbReference>
<dbReference type="FunFam" id="3.40.50.1000:FF:000028">
    <property type="entry name" value="Calcium-transporting P-type ATPase, putative"/>
    <property type="match status" value="1"/>
</dbReference>
<dbReference type="Gene3D" id="3.40.1110.10">
    <property type="entry name" value="Calcium-transporting ATPase, cytoplasmic domain N"/>
    <property type="match status" value="1"/>
</dbReference>
<dbReference type="Gene3D" id="2.70.150.10">
    <property type="entry name" value="Calcium-transporting ATPase, cytoplasmic transduction domain A"/>
    <property type="match status" value="1"/>
</dbReference>
<dbReference type="Gene3D" id="1.20.1110.10">
    <property type="entry name" value="Calcium-transporting ATPase, transmembrane domain"/>
    <property type="match status" value="1"/>
</dbReference>
<dbReference type="Gene3D" id="3.40.50.1000">
    <property type="entry name" value="HAD superfamily/HAD-like"/>
    <property type="match status" value="1"/>
</dbReference>
<dbReference type="InterPro" id="IPR006068">
    <property type="entry name" value="ATPase_P-typ_cation-transptr_C"/>
</dbReference>
<dbReference type="InterPro" id="IPR004014">
    <property type="entry name" value="ATPase_P-typ_cation-transptr_N"/>
</dbReference>
<dbReference type="InterPro" id="IPR023299">
    <property type="entry name" value="ATPase_P-typ_cyto_dom_N"/>
</dbReference>
<dbReference type="InterPro" id="IPR018303">
    <property type="entry name" value="ATPase_P-typ_P_site"/>
</dbReference>
<dbReference type="InterPro" id="IPR023298">
    <property type="entry name" value="ATPase_P-typ_TM_dom_sf"/>
</dbReference>
<dbReference type="InterPro" id="IPR008250">
    <property type="entry name" value="ATPase_P-typ_transduc_dom_A_sf"/>
</dbReference>
<dbReference type="InterPro" id="IPR036412">
    <property type="entry name" value="HAD-like_sf"/>
</dbReference>
<dbReference type="InterPro" id="IPR023214">
    <property type="entry name" value="HAD_sf"/>
</dbReference>
<dbReference type="InterPro" id="IPR006413">
    <property type="entry name" value="P-type_ATPase_IIA_PMR1"/>
</dbReference>
<dbReference type="InterPro" id="IPR001757">
    <property type="entry name" value="P_typ_ATPase"/>
</dbReference>
<dbReference type="InterPro" id="IPR044492">
    <property type="entry name" value="P_typ_ATPase_HD_dom"/>
</dbReference>
<dbReference type="NCBIfam" id="TIGR01522">
    <property type="entry name" value="ATPase-IIA2_Ca"/>
    <property type="match status" value="1"/>
</dbReference>
<dbReference type="NCBIfam" id="TIGR01494">
    <property type="entry name" value="ATPase_P-type"/>
    <property type="match status" value="2"/>
</dbReference>
<dbReference type="PANTHER" id="PTHR42861">
    <property type="entry name" value="CALCIUM-TRANSPORTING ATPASE"/>
    <property type="match status" value="1"/>
</dbReference>
<dbReference type="Pfam" id="PF13246">
    <property type="entry name" value="Cation_ATPase"/>
    <property type="match status" value="1"/>
</dbReference>
<dbReference type="Pfam" id="PF00689">
    <property type="entry name" value="Cation_ATPase_C"/>
    <property type="match status" value="1"/>
</dbReference>
<dbReference type="Pfam" id="PF00690">
    <property type="entry name" value="Cation_ATPase_N"/>
    <property type="match status" value="1"/>
</dbReference>
<dbReference type="Pfam" id="PF00122">
    <property type="entry name" value="E1-E2_ATPase"/>
    <property type="match status" value="1"/>
</dbReference>
<dbReference type="Pfam" id="PF00702">
    <property type="entry name" value="Hydrolase"/>
    <property type="match status" value="1"/>
</dbReference>
<dbReference type="PRINTS" id="PR00119">
    <property type="entry name" value="CATATPASE"/>
</dbReference>
<dbReference type="PRINTS" id="PR00120">
    <property type="entry name" value="HATPASE"/>
</dbReference>
<dbReference type="SFLD" id="SFLDS00003">
    <property type="entry name" value="Haloacid_Dehalogenase"/>
    <property type="match status" value="1"/>
</dbReference>
<dbReference type="SFLD" id="SFLDF00027">
    <property type="entry name" value="p-type_atpase"/>
    <property type="match status" value="1"/>
</dbReference>
<dbReference type="SMART" id="SM00831">
    <property type="entry name" value="Cation_ATPase_N"/>
    <property type="match status" value="1"/>
</dbReference>
<dbReference type="SUPFAM" id="SSF81653">
    <property type="entry name" value="Calcium ATPase, transduction domain A"/>
    <property type="match status" value="1"/>
</dbReference>
<dbReference type="SUPFAM" id="SSF81665">
    <property type="entry name" value="Calcium ATPase, transmembrane domain M"/>
    <property type="match status" value="1"/>
</dbReference>
<dbReference type="SUPFAM" id="SSF56784">
    <property type="entry name" value="HAD-like"/>
    <property type="match status" value="1"/>
</dbReference>
<dbReference type="SUPFAM" id="SSF81660">
    <property type="entry name" value="Metal cation-transporting ATPase, ATP-binding domain N"/>
    <property type="match status" value="1"/>
</dbReference>
<dbReference type="PROSITE" id="PS00154">
    <property type="entry name" value="ATPASE_E1_E2"/>
    <property type="match status" value="1"/>
</dbReference>